<name>RR4_PLAAD</name>
<feature type="chain" id="PRO_0000132654" description="Small ribosomal subunit protein uS4c">
    <location>
        <begin position="1"/>
        <end position="202"/>
    </location>
</feature>
<feature type="domain" description="S4 RNA-binding">
    <location>
        <begin position="90"/>
        <end position="151"/>
    </location>
</feature>
<proteinExistence type="inferred from homology"/>
<comment type="function">
    <text evidence="1">One of the primary rRNA binding proteins, it binds directly to 16S rRNA where it nucleates assembly of the body of the 30S subunit.</text>
</comment>
<comment type="function">
    <text evidence="1">With S5 and S12 plays an important role in translational accuracy.</text>
</comment>
<comment type="subunit">
    <text evidence="1">Part of the 30S ribosomal subunit. Contacts protein S5. The interaction surface between S4 and S5 is involved in control of translational fidelity (By similarity).</text>
</comment>
<comment type="subcellular location">
    <subcellularLocation>
        <location>Plastid</location>
        <location>Chloroplast</location>
    </subcellularLocation>
</comment>
<comment type="similarity">
    <text evidence="2">Belongs to the universal ribosomal protein uS4 family.</text>
</comment>
<accession>Q9FSE4</accession>
<geneLocation type="chloroplast"/>
<reference key="1">
    <citation type="submission" date="1999-10" db="EMBL/GenBank/DDBJ databases">
        <title>A molecular approach to bryophyte systematics.</title>
        <authorList>
            <person name="Capesius I."/>
            <person name="Bloecher R."/>
        </authorList>
    </citation>
    <scope>NUCLEOTIDE SEQUENCE [GENOMIC DNA]</scope>
    <source>
        <tissue>Gametophyte</tissue>
    </source>
</reference>
<gene>
    <name type="primary">rps4</name>
</gene>
<sequence>MSRYRGPRVKIIRRLGALPGLTSKTLKSKSNYIDRSTPNKKVSQYRIRLEEKQKLRSHYGLAERQLLKYMRIARKAKGSTGQILLQLLEMRLDNTIFRLGMSPTIPGARQLVNHRHISINNDVVDIPSYNCEPGDIITIGNKQKSRFIITKNINSFQRLKIPSHLIFDSTQLRGSVNQMINREWINLKINELLVVEYYSRQV</sequence>
<organism>
    <name type="scientific">Plagiochila adianthoides</name>
    <name type="common">Liverwort</name>
    <dbReference type="NCBI Taxonomy" id="53019"/>
    <lineage>
        <taxon>Eukaryota</taxon>
        <taxon>Viridiplantae</taxon>
        <taxon>Streptophyta</taxon>
        <taxon>Embryophyta</taxon>
        <taxon>Marchantiophyta</taxon>
        <taxon>Jungermanniopsida</taxon>
        <taxon>Jungermanniidae</taxon>
        <taxon>Jungermanniales</taxon>
        <taxon>Lophocoleineae</taxon>
        <taxon>Plagiochilaceae</taxon>
        <taxon>Plagiochila</taxon>
        <taxon>Plagiochila sect. Adianthoideae</taxon>
    </lineage>
</organism>
<keyword id="KW-0150">Chloroplast</keyword>
<keyword id="KW-0934">Plastid</keyword>
<keyword id="KW-0687">Ribonucleoprotein</keyword>
<keyword id="KW-0689">Ribosomal protein</keyword>
<keyword id="KW-0694">RNA-binding</keyword>
<keyword id="KW-0699">rRNA-binding</keyword>
<evidence type="ECO:0000250" key="1"/>
<evidence type="ECO:0000305" key="2"/>
<dbReference type="EMBL" id="AJ250181">
    <property type="protein sequence ID" value="CAC12828.1"/>
    <property type="molecule type" value="Genomic_DNA"/>
</dbReference>
<dbReference type="SMR" id="Q9FSE4"/>
<dbReference type="GO" id="GO:0009507">
    <property type="term" value="C:chloroplast"/>
    <property type="evidence" value="ECO:0007669"/>
    <property type="project" value="UniProtKB-SubCell"/>
</dbReference>
<dbReference type="GO" id="GO:0015935">
    <property type="term" value="C:small ribosomal subunit"/>
    <property type="evidence" value="ECO:0007669"/>
    <property type="project" value="InterPro"/>
</dbReference>
<dbReference type="GO" id="GO:0019843">
    <property type="term" value="F:rRNA binding"/>
    <property type="evidence" value="ECO:0007669"/>
    <property type="project" value="UniProtKB-UniRule"/>
</dbReference>
<dbReference type="GO" id="GO:0003735">
    <property type="term" value="F:structural constituent of ribosome"/>
    <property type="evidence" value="ECO:0007669"/>
    <property type="project" value="InterPro"/>
</dbReference>
<dbReference type="GO" id="GO:0042274">
    <property type="term" value="P:ribosomal small subunit biogenesis"/>
    <property type="evidence" value="ECO:0007669"/>
    <property type="project" value="TreeGrafter"/>
</dbReference>
<dbReference type="GO" id="GO:0006412">
    <property type="term" value="P:translation"/>
    <property type="evidence" value="ECO:0007669"/>
    <property type="project" value="UniProtKB-UniRule"/>
</dbReference>
<dbReference type="CDD" id="cd00165">
    <property type="entry name" value="S4"/>
    <property type="match status" value="1"/>
</dbReference>
<dbReference type="FunFam" id="3.10.290.10:FF:000001">
    <property type="entry name" value="30S ribosomal protein S4"/>
    <property type="match status" value="1"/>
</dbReference>
<dbReference type="FunFam" id="1.10.1050.10:FF:000002">
    <property type="entry name" value="30S ribosomal protein S4, chloroplastic"/>
    <property type="match status" value="1"/>
</dbReference>
<dbReference type="Gene3D" id="1.10.1050.10">
    <property type="entry name" value="Ribosomal Protein S4 Delta 41, Chain A, domain 1"/>
    <property type="match status" value="1"/>
</dbReference>
<dbReference type="Gene3D" id="3.10.290.10">
    <property type="entry name" value="RNA-binding S4 domain"/>
    <property type="match status" value="1"/>
</dbReference>
<dbReference type="HAMAP" id="MF_01306_B">
    <property type="entry name" value="Ribosomal_uS4_B"/>
    <property type="match status" value="1"/>
</dbReference>
<dbReference type="InterPro" id="IPR022801">
    <property type="entry name" value="Ribosomal_uS4"/>
</dbReference>
<dbReference type="InterPro" id="IPR005709">
    <property type="entry name" value="Ribosomal_uS4_bac-type"/>
</dbReference>
<dbReference type="InterPro" id="IPR018079">
    <property type="entry name" value="Ribosomal_uS4_CS"/>
</dbReference>
<dbReference type="InterPro" id="IPR001912">
    <property type="entry name" value="Ribosomal_uS4_N"/>
</dbReference>
<dbReference type="InterPro" id="IPR002942">
    <property type="entry name" value="S4_RNA-bd"/>
</dbReference>
<dbReference type="InterPro" id="IPR036986">
    <property type="entry name" value="S4_RNA-bd_sf"/>
</dbReference>
<dbReference type="NCBIfam" id="NF003717">
    <property type="entry name" value="PRK05327.1"/>
    <property type="match status" value="1"/>
</dbReference>
<dbReference type="NCBIfam" id="TIGR01017">
    <property type="entry name" value="rpsD_bact"/>
    <property type="match status" value="1"/>
</dbReference>
<dbReference type="PANTHER" id="PTHR11831">
    <property type="entry name" value="30S 40S RIBOSOMAL PROTEIN"/>
    <property type="match status" value="1"/>
</dbReference>
<dbReference type="PANTHER" id="PTHR11831:SF4">
    <property type="entry name" value="SMALL RIBOSOMAL SUBUNIT PROTEIN US4M"/>
    <property type="match status" value="1"/>
</dbReference>
<dbReference type="Pfam" id="PF00163">
    <property type="entry name" value="Ribosomal_S4"/>
    <property type="match status" value="1"/>
</dbReference>
<dbReference type="Pfam" id="PF01479">
    <property type="entry name" value="S4"/>
    <property type="match status" value="1"/>
</dbReference>
<dbReference type="SMART" id="SM01390">
    <property type="entry name" value="Ribosomal_S4"/>
    <property type="match status" value="1"/>
</dbReference>
<dbReference type="SMART" id="SM00363">
    <property type="entry name" value="S4"/>
    <property type="match status" value="1"/>
</dbReference>
<dbReference type="SUPFAM" id="SSF55174">
    <property type="entry name" value="Alpha-L RNA-binding motif"/>
    <property type="match status" value="1"/>
</dbReference>
<dbReference type="PROSITE" id="PS00632">
    <property type="entry name" value="RIBOSOMAL_S4"/>
    <property type="match status" value="1"/>
</dbReference>
<dbReference type="PROSITE" id="PS50889">
    <property type="entry name" value="S4"/>
    <property type="match status" value="1"/>
</dbReference>
<protein>
    <recommendedName>
        <fullName evidence="2">Small ribosomal subunit protein uS4c</fullName>
    </recommendedName>
    <alternativeName>
        <fullName>30S ribosomal protein S4, chloroplastic</fullName>
    </alternativeName>
</protein>